<accession>A3Q8U4</accession>
<feature type="chain" id="PRO_1000069576" description="Fatty acid oxidation complex subunit alpha">
    <location>
        <begin position="1"/>
        <end position="716"/>
    </location>
</feature>
<feature type="region of interest" description="Enoyl-CoA hydratase/isomerase" evidence="1">
    <location>
        <begin position="1"/>
        <end position="189"/>
    </location>
</feature>
<feature type="region of interest" description="3-hydroxyacyl-CoA dehydrogenase" evidence="1">
    <location>
        <begin position="311"/>
        <end position="716"/>
    </location>
</feature>
<feature type="active site" description="For 3-hydroxyacyl-CoA dehydrogenase activity" evidence="1">
    <location>
        <position position="450"/>
    </location>
</feature>
<feature type="binding site" evidence="1">
    <location>
        <position position="296"/>
    </location>
    <ligand>
        <name>substrate</name>
    </ligand>
</feature>
<feature type="binding site" evidence="1">
    <location>
        <position position="324"/>
    </location>
    <ligand>
        <name>NAD(+)</name>
        <dbReference type="ChEBI" id="CHEBI:57540"/>
    </ligand>
</feature>
<feature type="binding site" evidence="1">
    <location>
        <position position="343"/>
    </location>
    <ligand>
        <name>NAD(+)</name>
        <dbReference type="ChEBI" id="CHEBI:57540"/>
    </ligand>
</feature>
<feature type="binding site" evidence="1">
    <location>
        <begin position="400"/>
        <end position="402"/>
    </location>
    <ligand>
        <name>NAD(+)</name>
        <dbReference type="ChEBI" id="CHEBI:57540"/>
    </ligand>
</feature>
<feature type="binding site" evidence="1">
    <location>
        <position position="407"/>
    </location>
    <ligand>
        <name>NAD(+)</name>
        <dbReference type="ChEBI" id="CHEBI:57540"/>
    </ligand>
</feature>
<feature type="binding site" evidence="1">
    <location>
        <position position="429"/>
    </location>
    <ligand>
        <name>NAD(+)</name>
        <dbReference type="ChEBI" id="CHEBI:57540"/>
    </ligand>
</feature>
<feature type="binding site" evidence="1">
    <location>
        <position position="453"/>
    </location>
    <ligand>
        <name>NAD(+)</name>
        <dbReference type="ChEBI" id="CHEBI:57540"/>
    </ligand>
</feature>
<feature type="binding site" evidence="1">
    <location>
        <position position="500"/>
    </location>
    <ligand>
        <name>substrate</name>
    </ligand>
</feature>
<feature type="binding site" evidence="1">
    <location>
        <position position="660"/>
    </location>
    <ligand>
        <name>substrate</name>
    </ligand>
</feature>
<feature type="site" description="Important for catalytic activity" evidence="1">
    <location>
        <position position="119"/>
    </location>
</feature>
<feature type="site" description="Important for catalytic activity" evidence="1">
    <location>
        <position position="139"/>
    </location>
</feature>
<reference key="1">
    <citation type="submission" date="2007-03" db="EMBL/GenBank/DDBJ databases">
        <title>Complete sequence of Shewanella loihica PV-4.</title>
        <authorList>
            <consortium name="US DOE Joint Genome Institute"/>
            <person name="Copeland A."/>
            <person name="Lucas S."/>
            <person name="Lapidus A."/>
            <person name="Barry K."/>
            <person name="Detter J.C."/>
            <person name="Glavina del Rio T."/>
            <person name="Hammon N."/>
            <person name="Israni S."/>
            <person name="Dalin E."/>
            <person name="Tice H."/>
            <person name="Pitluck S."/>
            <person name="Chain P."/>
            <person name="Malfatti S."/>
            <person name="Shin M."/>
            <person name="Vergez L."/>
            <person name="Schmutz J."/>
            <person name="Larimer F."/>
            <person name="Land M."/>
            <person name="Hauser L."/>
            <person name="Kyrpides N."/>
            <person name="Mikhailova N."/>
            <person name="Romine M.F."/>
            <person name="Serres G."/>
            <person name="Fredrickson J."/>
            <person name="Tiedje J."/>
            <person name="Richardson P."/>
        </authorList>
    </citation>
    <scope>NUCLEOTIDE SEQUENCE [LARGE SCALE GENOMIC DNA]</scope>
    <source>
        <strain>ATCC BAA-1088 / PV-4</strain>
    </source>
</reference>
<comment type="function">
    <text evidence="1">Involved in the aerobic and anaerobic degradation of long-chain fatty acids via beta-oxidation cycle. Catalyzes the formation of 3-oxoacyl-CoA from enoyl-CoA via L-3-hydroxyacyl-CoA. It can also use D-3-hydroxyacyl-CoA and cis-3-enoyl-CoA as substrate.</text>
</comment>
<comment type="catalytic activity">
    <reaction evidence="1">
        <text>a (3S)-3-hydroxyacyl-CoA + NAD(+) = a 3-oxoacyl-CoA + NADH + H(+)</text>
        <dbReference type="Rhea" id="RHEA:22432"/>
        <dbReference type="ChEBI" id="CHEBI:15378"/>
        <dbReference type="ChEBI" id="CHEBI:57318"/>
        <dbReference type="ChEBI" id="CHEBI:57540"/>
        <dbReference type="ChEBI" id="CHEBI:57945"/>
        <dbReference type="ChEBI" id="CHEBI:90726"/>
        <dbReference type="EC" id="1.1.1.35"/>
    </reaction>
</comment>
<comment type="catalytic activity">
    <reaction evidence="1">
        <text>a (3S)-3-hydroxyacyl-CoA = a (2E)-enoyl-CoA + H2O</text>
        <dbReference type="Rhea" id="RHEA:16105"/>
        <dbReference type="ChEBI" id="CHEBI:15377"/>
        <dbReference type="ChEBI" id="CHEBI:57318"/>
        <dbReference type="ChEBI" id="CHEBI:58856"/>
        <dbReference type="EC" id="4.2.1.17"/>
    </reaction>
</comment>
<comment type="catalytic activity">
    <reaction evidence="1">
        <text>a 4-saturated-(3S)-3-hydroxyacyl-CoA = a (3E)-enoyl-CoA + H2O</text>
        <dbReference type="Rhea" id="RHEA:20724"/>
        <dbReference type="ChEBI" id="CHEBI:15377"/>
        <dbReference type="ChEBI" id="CHEBI:58521"/>
        <dbReference type="ChEBI" id="CHEBI:137480"/>
        <dbReference type="EC" id="4.2.1.17"/>
    </reaction>
</comment>
<comment type="catalytic activity">
    <reaction evidence="1">
        <text>(3S)-3-hydroxybutanoyl-CoA = (3R)-3-hydroxybutanoyl-CoA</text>
        <dbReference type="Rhea" id="RHEA:21760"/>
        <dbReference type="ChEBI" id="CHEBI:57315"/>
        <dbReference type="ChEBI" id="CHEBI:57316"/>
        <dbReference type="EC" id="5.1.2.3"/>
    </reaction>
</comment>
<comment type="catalytic activity">
    <reaction evidence="1">
        <text>a (3Z)-enoyl-CoA = a 4-saturated (2E)-enoyl-CoA</text>
        <dbReference type="Rhea" id="RHEA:45900"/>
        <dbReference type="ChEBI" id="CHEBI:85097"/>
        <dbReference type="ChEBI" id="CHEBI:85489"/>
        <dbReference type="EC" id="5.3.3.8"/>
    </reaction>
</comment>
<comment type="catalytic activity">
    <reaction evidence="1">
        <text>a (3E)-enoyl-CoA = a 4-saturated (2E)-enoyl-CoA</text>
        <dbReference type="Rhea" id="RHEA:45228"/>
        <dbReference type="ChEBI" id="CHEBI:58521"/>
        <dbReference type="ChEBI" id="CHEBI:85097"/>
        <dbReference type="EC" id="5.3.3.8"/>
    </reaction>
</comment>
<comment type="pathway">
    <text evidence="1">Lipid metabolism; fatty acid beta-oxidation.</text>
</comment>
<comment type="subunit">
    <text evidence="1">Heterotetramer of two alpha chains (FadB) and two beta chains (FadA).</text>
</comment>
<comment type="similarity">
    <text evidence="1">In the N-terminal section; belongs to the enoyl-CoA hydratase/isomerase family.</text>
</comment>
<comment type="similarity">
    <text evidence="1">In the C-terminal section; belongs to the 3-hydroxyacyl-CoA dehydrogenase family.</text>
</comment>
<protein>
    <recommendedName>
        <fullName evidence="1">Fatty acid oxidation complex subunit alpha</fullName>
    </recommendedName>
    <domain>
        <recommendedName>
            <fullName evidence="1">Enoyl-CoA hydratase/Delta(3)-cis-Delta(2)-trans-enoyl-CoA isomerase/3-hydroxybutyryl-CoA epimerase</fullName>
            <ecNumber evidence="1">4.2.1.17</ecNumber>
            <ecNumber evidence="1">5.1.2.3</ecNumber>
            <ecNumber evidence="1">5.3.3.8</ecNumber>
        </recommendedName>
    </domain>
    <domain>
        <recommendedName>
            <fullName evidence="1">3-hydroxyacyl-CoA dehydrogenase</fullName>
            <ecNumber evidence="1">1.1.1.35</ecNumber>
        </recommendedName>
    </domain>
</protein>
<dbReference type="EC" id="4.2.1.17" evidence="1"/>
<dbReference type="EC" id="5.1.2.3" evidence="1"/>
<dbReference type="EC" id="5.3.3.8" evidence="1"/>
<dbReference type="EC" id="1.1.1.35" evidence="1"/>
<dbReference type="EMBL" id="CP000606">
    <property type="protein sequence ID" value="ABO21892.1"/>
    <property type="molecule type" value="Genomic_DNA"/>
</dbReference>
<dbReference type="RefSeq" id="WP_011863829.1">
    <property type="nucleotide sequence ID" value="NC_009092.1"/>
</dbReference>
<dbReference type="SMR" id="A3Q8U4"/>
<dbReference type="STRING" id="323850.Shew_0019"/>
<dbReference type="KEGG" id="slo:Shew_0019"/>
<dbReference type="eggNOG" id="COG1024">
    <property type="taxonomic scope" value="Bacteria"/>
</dbReference>
<dbReference type="eggNOG" id="COG1250">
    <property type="taxonomic scope" value="Bacteria"/>
</dbReference>
<dbReference type="HOGENOM" id="CLU_009834_16_3_6"/>
<dbReference type="OrthoDB" id="5389341at2"/>
<dbReference type="UniPathway" id="UPA00659"/>
<dbReference type="Proteomes" id="UP000001558">
    <property type="component" value="Chromosome"/>
</dbReference>
<dbReference type="GO" id="GO:0036125">
    <property type="term" value="C:fatty acid beta-oxidation multienzyme complex"/>
    <property type="evidence" value="ECO:0007669"/>
    <property type="project" value="InterPro"/>
</dbReference>
<dbReference type="GO" id="GO:0008692">
    <property type="term" value="F:3-hydroxybutyryl-CoA epimerase activity"/>
    <property type="evidence" value="ECO:0007669"/>
    <property type="project" value="UniProtKB-UniRule"/>
</dbReference>
<dbReference type="GO" id="GO:0004165">
    <property type="term" value="F:delta(3)-delta(2)-enoyl-CoA isomerase activity"/>
    <property type="evidence" value="ECO:0007669"/>
    <property type="project" value="UniProtKB-UniRule"/>
</dbReference>
<dbReference type="GO" id="GO:0004300">
    <property type="term" value="F:enoyl-CoA hydratase activity"/>
    <property type="evidence" value="ECO:0007669"/>
    <property type="project" value="UniProtKB-UniRule"/>
</dbReference>
<dbReference type="GO" id="GO:0016509">
    <property type="term" value="F:long-chain-3-hydroxyacyl-CoA dehydrogenase activity"/>
    <property type="evidence" value="ECO:0007669"/>
    <property type="project" value="TreeGrafter"/>
</dbReference>
<dbReference type="GO" id="GO:0070403">
    <property type="term" value="F:NAD+ binding"/>
    <property type="evidence" value="ECO:0007669"/>
    <property type="project" value="InterPro"/>
</dbReference>
<dbReference type="GO" id="GO:0006635">
    <property type="term" value="P:fatty acid beta-oxidation"/>
    <property type="evidence" value="ECO:0007669"/>
    <property type="project" value="UniProtKB-UniRule"/>
</dbReference>
<dbReference type="CDD" id="cd06558">
    <property type="entry name" value="crotonase-like"/>
    <property type="match status" value="1"/>
</dbReference>
<dbReference type="FunFam" id="1.10.1040.50:FF:000001">
    <property type="entry name" value="Fatty acid oxidation complex subunit alpha"/>
    <property type="match status" value="1"/>
</dbReference>
<dbReference type="FunFam" id="3.40.50.720:FF:000009">
    <property type="entry name" value="Fatty oxidation complex, alpha subunit"/>
    <property type="match status" value="1"/>
</dbReference>
<dbReference type="Gene3D" id="1.10.1040.50">
    <property type="match status" value="1"/>
</dbReference>
<dbReference type="Gene3D" id="3.90.226.10">
    <property type="entry name" value="2-enoyl-CoA Hydratase, Chain A, domain 1"/>
    <property type="match status" value="1"/>
</dbReference>
<dbReference type="Gene3D" id="3.40.50.720">
    <property type="entry name" value="NAD(P)-binding Rossmann-like Domain"/>
    <property type="match status" value="1"/>
</dbReference>
<dbReference type="HAMAP" id="MF_01621">
    <property type="entry name" value="FadB"/>
    <property type="match status" value="1"/>
</dbReference>
<dbReference type="InterPro" id="IPR006180">
    <property type="entry name" value="3-OHacyl-CoA_DH_CS"/>
</dbReference>
<dbReference type="InterPro" id="IPR006176">
    <property type="entry name" value="3-OHacyl-CoA_DH_NAD-bd"/>
</dbReference>
<dbReference type="InterPro" id="IPR006108">
    <property type="entry name" value="3HC_DH_C"/>
</dbReference>
<dbReference type="InterPro" id="IPR008927">
    <property type="entry name" value="6-PGluconate_DH-like_C_sf"/>
</dbReference>
<dbReference type="InterPro" id="IPR029045">
    <property type="entry name" value="ClpP/crotonase-like_dom_sf"/>
</dbReference>
<dbReference type="InterPro" id="IPR001753">
    <property type="entry name" value="Enoyl-CoA_hydra/iso"/>
</dbReference>
<dbReference type="InterPro" id="IPR050136">
    <property type="entry name" value="FA_oxidation_alpha_subunit"/>
</dbReference>
<dbReference type="InterPro" id="IPR012799">
    <property type="entry name" value="FadB"/>
</dbReference>
<dbReference type="InterPro" id="IPR036291">
    <property type="entry name" value="NAD(P)-bd_dom_sf"/>
</dbReference>
<dbReference type="NCBIfam" id="TIGR02437">
    <property type="entry name" value="FadB"/>
    <property type="match status" value="1"/>
</dbReference>
<dbReference type="NCBIfam" id="NF008727">
    <property type="entry name" value="PRK11730.1"/>
    <property type="match status" value="1"/>
</dbReference>
<dbReference type="PANTHER" id="PTHR43612">
    <property type="entry name" value="TRIFUNCTIONAL ENZYME SUBUNIT ALPHA"/>
    <property type="match status" value="1"/>
</dbReference>
<dbReference type="PANTHER" id="PTHR43612:SF3">
    <property type="entry name" value="TRIFUNCTIONAL ENZYME SUBUNIT ALPHA, MITOCHONDRIAL"/>
    <property type="match status" value="1"/>
</dbReference>
<dbReference type="Pfam" id="PF00725">
    <property type="entry name" value="3HCDH"/>
    <property type="match status" value="1"/>
</dbReference>
<dbReference type="Pfam" id="PF02737">
    <property type="entry name" value="3HCDH_N"/>
    <property type="match status" value="1"/>
</dbReference>
<dbReference type="Pfam" id="PF00378">
    <property type="entry name" value="ECH_1"/>
    <property type="match status" value="1"/>
</dbReference>
<dbReference type="SUPFAM" id="SSF48179">
    <property type="entry name" value="6-phosphogluconate dehydrogenase C-terminal domain-like"/>
    <property type="match status" value="2"/>
</dbReference>
<dbReference type="SUPFAM" id="SSF52096">
    <property type="entry name" value="ClpP/crotonase"/>
    <property type="match status" value="1"/>
</dbReference>
<dbReference type="SUPFAM" id="SSF51735">
    <property type="entry name" value="NAD(P)-binding Rossmann-fold domains"/>
    <property type="match status" value="1"/>
</dbReference>
<dbReference type="PROSITE" id="PS00067">
    <property type="entry name" value="3HCDH"/>
    <property type="match status" value="1"/>
</dbReference>
<name>FADB_SHELP</name>
<organism>
    <name type="scientific">Shewanella loihica (strain ATCC BAA-1088 / PV-4)</name>
    <dbReference type="NCBI Taxonomy" id="323850"/>
    <lineage>
        <taxon>Bacteria</taxon>
        <taxon>Pseudomonadati</taxon>
        <taxon>Pseudomonadota</taxon>
        <taxon>Gammaproteobacteria</taxon>
        <taxon>Alteromonadales</taxon>
        <taxon>Shewanellaceae</taxon>
        <taxon>Shewanella</taxon>
    </lineage>
</organism>
<evidence type="ECO:0000255" key="1">
    <source>
        <dbReference type="HAMAP-Rule" id="MF_01621"/>
    </source>
</evidence>
<keyword id="KW-0276">Fatty acid metabolism</keyword>
<keyword id="KW-0413">Isomerase</keyword>
<keyword id="KW-0442">Lipid degradation</keyword>
<keyword id="KW-0443">Lipid metabolism</keyword>
<keyword id="KW-0456">Lyase</keyword>
<keyword id="KW-0511">Multifunctional enzyme</keyword>
<keyword id="KW-0520">NAD</keyword>
<keyword id="KW-0560">Oxidoreductase</keyword>
<keyword id="KW-1185">Reference proteome</keyword>
<sequence length="716" mass="77144">MIYQSPTIQVELLEDNIARLCFNAEGSVNKFDRETLNSLNDALDALAQTQGVKGLMLTSGKDAFIVGADITEFLGLFAQDDNVLQGWLEDANKVFNKLEDLPFPTISAIKGFALGGGCETILATDLRIADTSARIGLPETKLGIIPGFGGTVRLPRVIGADNALEWITTGKDQRPEAALKVGAIDAVVAPELLETAACQMLQDAISEKIDWQARRQRKLSPLTLPKLEAMMSFATAKGMVFKVAGKHYPAPMAVVEVIEKAALSERAEALQVEHQAFIKLAKTDVAKALIGIFLNDQLVKGKAKKAAKQAQAVNSAAVLGAGIMGGGIAYQSASKGTPIVMKDINQAALDLGLNEAAKLLTAQINRGRSTPAKMAGVLNNITATLDYNALKQADVVVEAVVEHPKVKATVLAEVEQVVGEDAIITSNTSTISINLLAKSLQKPERFCGMHFFNPVHKMPLVEVIRGEHSSEETVASVVAYAAKMGKTPIVVNDCPGFFVNRVLFPYFAGFSGLLEDGADFAAIDKVMEKQFGWPMGPAYLLDVVGLDTGHHAQAVMAEGFPDRMAKEGKDAIDVMFEADRFGQKNGKGFYQYSVDRRGKPKKEVDPLSYELLGNAFGEQKEFSSDEIIARTMIPMIIETVRCLEEGIIATPAEADMGLVYGLGFPPFRGGVFRYLDTLGVANFVALADQYAHLGGLYQVTDKMRELAATNGSYYPA</sequence>
<gene>
    <name evidence="1" type="primary">fadB</name>
    <name type="ordered locus">Shew_0019</name>
</gene>
<proteinExistence type="inferred from homology"/>